<reference key="1">
    <citation type="submission" date="2006-05" db="EMBL/GenBank/DDBJ databases">
        <title>Complete sequence of chromosome 2 of Burkholderia cenocepacia AU 1054.</title>
        <authorList>
            <consortium name="US DOE Joint Genome Institute"/>
            <person name="Copeland A."/>
            <person name="Lucas S."/>
            <person name="Lapidus A."/>
            <person name="Barry K."/>
            <person name="Detter J.C."/>
            <person name="Glavina del Rio T."/>
            <person name="Hammon N."/>
            <person name="Israni S."/>
            <person name="Dalin E."/>
            <person name="Tice H."/>
            <person name="Pitluck S."/>
            <person name="Chain P."/>
            <person name="Malfatti S."/>
            <person name="Shin M."/>
            <person name="Vergez L."/>
            <person name="Schmutz J."/>
            <person name="Larimer F."/>
            <person name="Land M."/>
            <person name="Hauser L."/>
            <person name="Kyrpides N."/>
            <person name="Lykidis A."/>
            <person name="LiPuma J.J."/>
            <person name="Konstantinidis K."/>
            <person name="Tiedje J.M."/>
            <person name="Richardson P."/>
        </authorList>
    </citation>
    <scope>NUCLEOTIDE SEQUENCE [LARGE SCALE GENOMIC DNA]</scope>
    <source>
        <strain>AU 1054</strain>
    </source>
</reference>
<name>ATPE2_BURO1</name>
<feature type="chain" id="PRO_0000265792" description="ATP synthase epsilon chain 2">
    <location>
        <begin position="1"/>
        <end position="152"/>
    </location>
</feature>
<dbReference type="EMBL" id="CP000379">
    <property type="protein sequence ID" value="ABF78386.1"/>
    <property type="molecule type" value="Genomic_DNA"/>
</dbReference>
<dbReference type="SMR" id="Q1BPR9"/>
<dbReference type="HOGENOM" id="CLU_084338_2_0_4"/>
<dbReference type="GO" id="GO:0005886">
    <property type="term" value="C:plasma membrane"/>
    <property type="evidence" value="ECO:0007669"/>
    <property type="project" value="UniProtKB-SubCell"/>
</dbReference>
<dbReference type="GO" id="GO:0045259">
    <property type="term" value="C:proton-transporting ATP synthase complex"/>
    <property type="evidence" value="ECO:0007669"/>
    <property type="project" value="UniProtKB-KW"/>
</dbReference>
<dbReference type="GO" id="GO:0005524">
    <property type="term" value="F:ATP binding"/>
    <property type="evidence" value="ECO:0007669"/>
    <property type="project" value="UniProtKB-UniRule"/>
</dbReference>
<dbReference type="GO" id="GO:0046933">
    <property type="term" value="F:proton-transporting ATP synthase activity, rotational mechanism"/>
    <property type="evidence" value="ECO:0007669"/>
    <property type="project" value="UniProtKB-UniRule"/>
</dbReference>
<dbReference type="CDD" id="cd12152">
    <property type="entry name" value="F1-ATPase_delta"/>
    <property type="match status" value="1"/>
</dbReference>
<dbReference type="Gene3D" id="2.60.15.10">
    <property type="entry name" value="F0F1 ATP synthase delta/epsilon subunit, N-terminal"/>
    <property type="match status" value="1"/>
</dbReference>
<dbReference type="HAMAP" id="MF_00530">
    <property type="entry name" value="ATP_synth_epsil_bac"/>
    <property type="match status" value="1"/>
</dbReference>
<dbReference type="InterPro" id="IPR001469">
    <property type="entry name" value="ATP_synth_F1_dsu/esu"/>
</dbReference>
<dbReference type="InterPro" id="IPR020546">
    <property type="entry name" value="ATP_synth_F1_dsu/esu_N"/>
</dbReference>
<dbReference type="InterPro" id="IPR036771">
    <property type="entry name" value="ATPsynth_dsu/esu_N"/>
</dbReference>
<dbReference type="NCBIfam" id="TIGR01216">
    <property type="entry name" value="ATP_synt_epsi"/>
    <property type="match status" value="1"/>
</dbReference>
<dbReference type="PANTHER" id="PTHR13822">
    <property type="entry name" value="ATP SYNTHASE DELTA/EPSILON CHAIN"/>
    <property type="match status" value="1"/>
</dbReference>
<dbReference type="PANTHER" id="PTHR13822:SF10">
    <property type="entry name" value="ATP SYNTHASE EPSILON CHAIN, CHLOROPLASTIC"/>
    <property type="match status" value="1"/>
</dbReference>
<dbReference type="Pfam" id="PF02823">
    <property type="entry name" value="ATP-synt_DE_N"/>
    <property type="match status" value="1"/>
</dbReference>
<dbReference type="SUPFAM" id="SSF51344">
    <property type="entry name" value="Epsilon subunit of F1F0-ATP synthase N-terminal domain"/>
    <property type="match status" value="1"/>
</dbReference>
<sequence length="152" mass="16870">MKTSMKLDIVSVEAALYAGDAHFVVVPGESGELGIYPHHAPLLTRIRPGVVTLVDAPTGEHRRLLVAGGVLEVSRDGVTLIADHALRTPELDELRTREARHAADDWRQRYAHENRRAFDFASARAELMEEIRRFFAMALRQQAPHDKPGSAG</sequence>
<comment type="function">
    <text evidence="1">Produces ATP from ADP in the presence of a proton gradient across the membrane.</text>
</comment>
<comment type="subunit">
    <text>F-type ATPases have 2 components, CF(1) - the catalytic core - and CF(0) - the membrane proton channel. CF(1) has five subunits: alpha(3), beta(3), gamma(1), delta(1), epsilon(1). CF(0) has three main subunits: a, b and c.</text>
</comment>
<comment type="subcellular location">
    <subcellularLocation>
        <location evidence="1">Cell inner membrane</location>
        <topology evidence="1">Peripheral membrane protein</topology>
    </subcellularLocation>
</comment>
<comment type="similarity">
    <text evidence="1">Belongs to the ATPase epsilon chain family.</text>
</comment>
<accession>Q1BPR9</accession>
<evidence type="ECO:0000255" key="1">
    <source>
        <dbReference type="HAMAP-Rule" id="MF_00530"/>
    </source>
</evidence>
<gene>
    <name evidence="1" type="primary">atpC2</name>
    <name type="ordered locus">Bcen_3492</name>
</gene>
<organism>
    <name type="scientific">Burkholderia orbicola (strain AU 1054)</name>
    <dbReference type="NCBI Taxonomy" id="331271"/>
    <lineage>
        <taxon>Bacteria</taxon>
        <taxon>Pseudomonadati</taxon>
        <taxon>Pseudomonadota</taxon>
        <taxon>Betaproteobacteria</taxon>
        <taxon>Burkholderiales</taxon>
        <taxon>Burkholderiaceae</taxon>
        <taxon>Burkholderia</taxon>
        <taxon>Burkholderia cepacia complex</taxon>
        <taxon>Burkholderia orbicola</taxon>
    </lineage>
</organism>
<proteinExistence type="inferred from homology"/>
<protein>
    <recommendedName>
        <fullName evidence="1">ATP synthase epsilon chain 2</fullName>
    </recommendedName>
    <alternativeName>
        <fullName evidence="1">ATP synthase F1 sector epsilon subunit 2</fullName>
    </alternativeName>
    <alternativeName>
        <fullName evidence="1">F-ATPase epsilon subunit 2</fullName>
    </alternativeName>
</protein>
<keyword id="KW-0066">ATP synthesis</keyword>
<keyword id="KW-0997">Cell inner membrane</keyword>
<keyword id="KW-1003">Cell membrane</keyword>
<keyword id="KW-0139">CF(1)</keyword>
<keyword id="KW-0375">Hydrogen ion transport</keyword>
<keyword id="KW-0406">Ion transport</keyword>
<keyword id="KW-0472">Membrane</keyword>
<keyword id="KW-0813">Transport</keyword>